<evidence type="ECO:0000255" key="1">
    <source>
        <dbReference type="HAMAP-Rule" id="MF_00412"/>
    </source>
</evidence>
<name>PROA_MEIRU</name>
<accession>O86053</accession>
<protein>
    <recommendedName>
        <fullName evidence="1">Gamma-glutamyl phosphate reductase</fullName>
        <shortName evidence="1">GPR</shortName>
        <ecNumber evidence="1">1.2.1.41</ecNumber>
    </recommendedName>
    <alternativeName>
        <fullName evidence="1">Glutamate-5-semialdehyde dehydrogenase</fullName>
    </alternativeName>
    <alternativeName>
        <fullName evidence="1">Glutamyl-gamma-semialdehyde dehydrogenase</fullName>
        <shortName evidence="1">GSA dehydrogenase</shortName>
    </alternativeName>
</protein>
<sequence>MVTSPELKAYAQAARAAARALSTASPRAKNTALLAIAAKLEAQQEALFAANREDLEAAQAAGLSKAKLDRLRLDEKVLRDLRTGLQQVAEMPDPVGEIEGLQIRPNGLQVGRMRVPLGVIGFIYESRPNATVEASALCLKAGNAILLRGGKEAWHSNRALVGLMQAALQEAGLPREAIQLVPTTDRSAILEMCHLADLLDLIIPRGGRGLIELVQREARIPVLAHTEGINHLFVDESTDPGCAVQIALNGKTQRPSTCNSLEKVLVHQRIAPVFLPMLAQAMQKAGVELRGDEATCALIPARPATPEDWQTEYLDLILTVKVVNSLEEALEHIARYGSHHTEAICTNHHAHAMRFLREVDASLVLVNASPRFNDGFQLGLGAEIGISTSKLHAYGPMGVKELTTTKFVALGSGQVRD</sequence>
<feature type="chain" id="PRO_0000189748" description="Gamma-glutamyl phosphate reductase">
    <location>
        <begin position="1"/>
        <end position="417"/>
    </location>
</feature>
<organism>
    <name type="scientific">Meiothermus ruber</name>
    <dbReference type="NCBI Taxonomy" id="277"/>
    <lineage>
        <taxon>Bacteria</taxon>
        <taxon>Thermotogati</taxon>
        <taxon>Deinococcota</taxon>
        <taxon>Deinococci</taxon>
        <taxon>Thermales</taxon>
        <taxon>Thermaceae</taxon>
        <taxon>Meiothermus</taxon>
    </lineage>
</organism>
<comment type="function">
    <text evidence="1">Catalyzes the NADPH-dependent reduction of L-glutamate 5-phosphate into L-glutamate 5-semialdehyde and phosphate. The product spontaneously undergoes cyclization to form 1-pyrroline-5-carboxylate.</text>
</comment>
<comment type="catalytic activity">
    <reaction evidence="1">
        <text>L-glutamate 5-semialdehyde + phosphate + NADP(+) = L-glutamyl 5-phosphate + NADPH + H(+)</text>
        <dbReference type="Rhea" id="RHEA:19541"/>
        <dbReference type="ChEBI" id="CHEBI:15378"/>
        <dbReference type="ChEBI" id="CHEBI:43474"/>
        <dbReference type="ChEBI" id="CHEBI:57783"/>
        <dbReference type="ChEBI" id="CHEBI:58066"/>
        <dbReference type="ChEBI" id="CHEBI:58274"/>
        <dbReference type="ChEBI" id="CHEBI:58349"/>
        <dbReference type="EC" id="1.2.1.41"/>
    </reaction>
</comment>
<comment type="pathway">
    <text evidence="1">Amino-acid biosynthesis; L-proline biosynthesis; L-glutamate 5-semialdehyde from L-glutamate: step 2/2.</text>
</comment>
<comment type="subcellular location">
    <subcellularLocation>
        <location evidence="1">Cytoplasm</location>
    </subcellularLocation>
</comment>
<comment type="similarity">
    <text evidence="1">Belongs to the gamma-glutamyl phosphate reductase family.</text>
</comment>
<proteinExistence type="inferred from homology"/>
<dbReference type="EC" id="1.2.1.41" evidence="1"/>
<dbReference type="EMBL" id="AF082661">
    <property type="protein sequence ID" value="AAC72811.1"/>
    <property type="molecule type" value="Genomic_DNA"/>
</dbReference>
<dbReference type="SMR" id="O86053"/>
<dbReference type="UniPathway" id="UPA00098">
    <property type="reaction ID" value="UER00360"/>
</dbReference>
<dbReference type="GO" id="GO:0005737">
    <property type="term" value="C:cytoplasm"/>
    <property type="evidence" value="ECO:0007669"/>
    <property type="project" value="UniProtKB-SubCell"/>
</dbReference>
<dbReference type="GO" id="GO:0004350">
    <property type="term" value="F:glutamate-5-semialdehyde dehydrogenase activity"/>
    <property type="evidence" value="ECO:0007669"/>
    <property type="project" value="UniProtKB-UniRule"/>
</dbReference>
<dbReference type="GO" id="GO:0050661">
    <property type="term" value="F:NADP binding"/>
    <property type="evidence" value="ECO:0007669"/>
    <property type="project" value="InterPro"/>
</dbReference>
<dbReference type="GO" id="GO:0055129">
    <property type="term" value="P:L-proline biosynthetic process"/>
    <property type="evidence" value="ECO:0007669"/>
    <property type="project" value="UniProtKB-UniRule"/>
</dbReference>
<dbReference type="CDD" id="cd07079">
    <property type="entry name" value="ALDH_F18-19_ProA-GPR"/>
    <property type="match status" value="1"/>
</dbReference>
<dbReference type="FunFam" id="3.40.309.10:FF:000006">
    <property type="entry name" value="Gamma-glutamyl phosphate reductase"/>
    <property type="match status" value="1"/>
</dbReference>
<dbReference type="Gene3D" id="3.40.605.10">
    <property type="entry name" value="Aldehyde Dehydrogenase, Chain A, domain 1"/>
    <property type="match status" value="1"/>
</dbReference>
<dbReference type="Gene3D" id="3.40.309.10">
    <property type="entry name" value="Aldehyde Dehydrogenase, Chain A, domain 2"/>
    <property type="match status" value="1"/>
</dbReference>
<dbReference type="HAMAP" id="MF_00412">
    <property type="entry name" value="ProA"/>
    <property type="match status" value="1"/>
</dbReference>
<dbReference type="InterPro" id="IPR016161">
    <property type="entry name" value="Ald_DH/histidinol_DH"/>
</dbReference>
<dbReference type="InterPro" id="IPR016163">
    <property type="entry name" value="Ald_DH_C"/>
</dbReference>
<dbReference type="InterPro" id="IPR016162">
    <property type="entry name" value="Ald_DH_N"/>
</dbReference>
<dbReference type="InterPro" id="IPR015590">
    <property type="entry name" value="Aldehyde_DH_dom"/>
</dbReference>
<dbReference type="InterPro" id="IPR020593">
    <property type="entry name" value="G-glutamylP_reductase_CS"/>
</dbReference>
<dbReference type="InterPro" id="IPR012134">
    <property type="entry name" value="Glu-5-SA_DH"/>
</dbReference>
<dbReference type="InterPro" id="IPR000965">
    <property type="entry name" value="GPR_dom"/>
</dbReference>
<dbReference type="NCBIfam" id="NF001221">
    <property type="entry name" value="PRK00197.1"/>
    <property type="match status" value="1"/>
</dbReference>
<dbReference type="NCBIfam" id="TIGR00407">
    <property type="entry name" value="proA"/>
    <property type="match status" value="1"/>
</dbReference>
<dbReference type="PANTHER" id="PTHR11063:SF8">
    <property type="entry name" value="DELTA-1-PYRROLINE-5-CARBOXYLATE SYNTHASE"/>
    <property type="match status" value="1"/>
</dbReference>
<dbReference type="PANTHER" id="PTHR11063">
    <property type="entry name" value="GLUTAMATE SEMIALDEHYDE DEHYDROGENASE"/>
    <property type="match status" value="1"/>
</dbReference>
<dbReference type="Pfam" id="PF00171">
    <property type="entry name" value="Aldedh"/>
    <property type="match status" value="1"/>
</dbReference>
<dbReference type="PIRSF" id="PIRSF000151">
    <property type="entry name" value="GPR"/>
    <property type="match status" value="1"/>
</dbReference>
<dbReference type="SUPFAM" id="SSF53720">
    <property type="entry name" value="ALDH-like"/>
    <property type="match status" value="1"/>
</dbReference>
<dbReference type="PROSITE" id="PS01223">
    <property type="entry name" value="PROA"/>
    <property type="match status" value="1"/>
</dbReference>
<keyword id="KW-0028">Amino-acid biosynthesis</keyword>
<keyword id="KW-0963">Cytoplasm</keyword>
<keyword id="KW-0521">NADP</keyword>
<keyword id="KW-0560">Oxidoreductase</keyword>
<keyword id="KW-0641">Proline biosynthesis</keyword>
<gene>
    <name evidence="1" type="primary">proA</name>
</gene>
<reference key="1">
    <citation type="submission" date="1998-08" db="EMBL/GenBank/DDBJ databases">
        <title>Molecular cloning and sequence analysis of the proA gene from thermophilic eubacterium Thermus ruber.</title>
        <authorList>
            <person name="Yaklichkin S.Y."/>
            <person name="Zimina M.S."/>
            <person name="Yurchenko Y.V."/>
            <person name="Hromov I.S."/>
            <person name="Neumivakin L.V."/>
        </authorList>
    </citation>
    <scope>NUCLEOTIDE SEQUENCE [GENOMIC DNA]</scope>
    <source>
        <strain>40</strain>
    </source>
</reference>